<keyword id="KW-0963">Cytoplasm</keyword>
<keyword id="KW-0251">Elongation factor</keyword>
<keyword id="KW-0648">Protein biosynthesis</keyword>
<keyword id="KW-1185">Reference proteome</keyword>
<dbReference type="EMBL" id="AE014295">
    <property type="protein sequence ID" value="AAN25299.1"/>
    <property type="molecule type" value="Genomic_DNA"/>
</dbReference>
<dbReference type="RefSeq" id="NP_696663.1">
    <property type="nucleotide sequence ID" value="NC_004307.2"/>
</dbReference>
<dbReference type="RefSeq" id="WP_007052754.1">
    <property type="nucleotide sequence ID" value="NC_004307.2"/>
</dbReference>
<dbReference type="SMR" id="Q8G485"/>
<dbReference type="STRING" id="206672.BL1504"/>
<dbReference type="EnsemblBacteria" id="AAN25299">
    <property type="protein sequence ID" value="AAN25299"/>
    <property type="gene ID" value="BL1504"/>
</dbReference>
<dbReference type="GeneID" id="69578356"/>
<dbReference type="KEGG" id="blo:BL1504"/>
<dbReference type="PATRIC" id="fig|206672.9.peg.376"/>
<dbReference type="HOGENOM" id="CLU_047155_0_0_11"/>
<dbReference type="OrthoDB" id="9808348at2"/>
<dbReference type="PhylomeDB" id="Q8G485"/>
<dbReference type="Proteomes" id="UP000000439">
    <property type="component" value="Chromosome"/>
</dbReference>
<dbReference type="GO" id="GO:0005737">
    <property type="term" value="C:cytoplasm"/>
    <property type="evidence" value="ECO:0007669"/>
    <property type="project" value="UniProtKB-SubCell"/>
</dbReference>
<dbReference type="GO" id="GO:0003746">
    <property type="term" value="F:translation elongation factor activity"/>
    <property type="evidence" value="ECO:0007669"/>
    <property type="project" value="UniProtKB-UniRule"/>
</dbReference>
<dbReference type="CDD" id="cd14275">
    <property type="entry name" value="UBA_EF-Ts"/>
    <property type="match status" value="1"/>
</dbReference>
<dbReference type="FunFam" id="1.10.286.20:FF:000001">
    <property type="entry name" value="Elongation factor Ts"/>
    <property type="match status" value="1"/>
</dbReference>
<dbReference type="FunFam" id="1.10.8.10:FF:000001">
    <property type="entry name" value="Elongation factor Ts"/>
    <property type="match status" value="1"/>
</dbReference>
<dbReference type="Gene3D" id="1.10.286.20">
    <property type="match status" value="1"/>
</dbReference>
<dbReference type="Gene3D" id="1.10.8.10">
    <property type="entry name" value="DNA helicase RuvA subunit, C-terminal domain"/>
    <property type="match status" value="1"/>
</dbReference>
<dbReference type="Gene3D" id="3.30.479.20">
    <property type="entry name" value="Elongation factor Ts, dimerisation domain"/>
    <property type="match status" value="2"/>
</dbReference>
<dbReference type="HAMAP" id="MF_00050">
    <property type="entry name" value="EF_Ts"/>
    <property type="match status" value="1"/>
</dbReference>
<dbReference type="InterPro" id="IPR036402">
    <property type="entry name" value="EF-Ts_dimer_sf"/>
</dbReference>
<dbReference type="InterPro" id="IPR001816">
    <property type="entry name" value="Transl_elong_EFTs/EF1B"/>
</dbReference>
<dbReference type="InterPro" id="IPR014039">
    <property type="entry name" value="Transl_elong_EFTs/EF1B_dimer"/>
</dbReference>
<dbReference type="InterPro" id="IPR018101">
    <property type="entry name" value="Transl_elong_Ts_CS"/>
</dbReference>
<dbReference type="InterPro" id="IPR009060">
    <property type="entry name" value="UBA-like_sf"/>
</dbReference>
<dbReference type="NCBIfam" id="TIGR00116">
    <property type="entry name" value="tsf"/>
    <property type="match status" value="1"/>
</dbReference>
<dbReference type="PANTHER" id="PTHR11741">
    <property type="entry name" value="ELONGATION FACTOR TS"/>
    <property type="match status" value="1"/>
</dbReference>
<dbReference type="PANTHER" id="PTHR11741:SF0">
    <property type="entry name" value="ELONGATION FACTOR TS, MITOCHONDRIAL"/>
    <property type="match status" value="1"/>
</dbReference>
<dbReference type="Pfam" id="PF00889">
    <property type="entry name" value="EF_TS"/>
    <property type="match status" value="1"/>
</dbReference>
<dbReference type="SUPFAM" id="SSF54713">
    <property type="entry name" value="Elongation factor Ts (EF-Ts), dimerisation domain"/>
    <property type="match status" value="1"/>
</dbReference>
<dbReference type="SUPFAM" id="SSF46934">
    <property type="entry name" value="UBA-like"/>
    <property type="match status" value="1"/>
</dbReference>
<dbReference type="PROSITE" id="PS01127">
    <property type="entry name" value="EF_TS_2"/>
    <property type="match status" value="1"/>
</dbReference>
<reference key="1">
    <citation type="journal article" date="2002" name="Proc. Natl. Acad. Sci. U.S.A.">
        <title>The genome sequence of Bifidobacterium longum reflects its adaptation to the human gastrointestinal tract.</title>
        <authorList>
            <person name="Schell M.A."/>
            <person name="Karmirantzou M."/>
            <person name="Snel B."/>
            <person name="Vilanova D."/>
            <person name="Berger B."/>
            <person name="Pessi G."/>
            <person name="Zwahlen M.-C."/>
            <person name="Desiere F."/>
            <person name="Bork P."/>
            <person name="Delley M."/>
            <person name="Pridmore R.D."/>
            <person name="Arigoni F."/>
        </authorList>
    </citation>
    <scope>NUCLEOTIDE SEQUENCE [LARGE SCALE GENOMIC DNA]</scope>
    <source>
        <strain>NCC 2705</strain>
    </source>
</reference>
<proteinExistence type="inferred from homology"/>
<sequence length="283" mass="29979">MAAITAALIKQVREDTGAGMLDVKKALTEAEGDVARAKEIIRAKGIAAAGKREGRKAQEGTIASKVVETANGETGYAVELNSETDFVAKTPKFVEFTEEVLGYAVDADANSADELLEAKAGDTTVKLAVEEAAALFGEHVKVGQFAKISGEHVEVYAHKKSAEMPPSIVAMIATDKAGAAVAHEAALQISAMGAKWLTREDVPADVVESERRVATEKSLAEGKPEKIVPKIVEGRLNAFFKEVVLLEQPFVKDPSKTVGDLFKEVGGNATAFARVEVGKGEEE</sequence>
<organism>
    <name type="scientific">Bifidobacterium longum (strain NCC 2705)</name>
    <dbReference type="NCBI Taxonomy" id="206672"/>
    <lineage>
        <taxon>Bacteria</taxon>
        <taxon>Bacillati</taxon>
        <taxon>Actinomycetota</taxon>
        <taxon>Actinomycetes</taxon>
        <taxon>Bifidobacteriales</taxon>
        <taxon>Bifidobacteriaceae</taxon>
        <taxon>Bifidobacterium</taxon>
    </lineage>
</organism>
<feature type="chain" id="PRO_0000161083" description="Elongation factor Ts">
    <location>
        <begin position="1"/>
        <end position="283"/>
    </location>
</feature>
<feature type="region of interest" description="Involved in Mg(2+) ion dislocation from EF-Tu" evidence="1">
    <location>
        <begin position="84"/>
        <end position="87"/>
    </location>
</feature>
<evidence type="ECO:0000255" key="1">
    <source>
        <dbReference type="HAMAP-Rule" id="MF_00050"/>
    </source>
</evidence>
<name>EFTS_BIFLO</name>
<protein>
    <recommendedName>
        <fullName evidence="1">Elongation factor Ts</fullName>
        <shortName evidence="1">EF-Ts</shortName>
    </recommendedName>
</protein>
<gene>
    <name evidence="1" type="primary">tsf</name>
    <name type="ordered locus">BL1504</name>
</gene>
<accession>Q8G485</accession>
<comment type="function">
    <text evidence="1">Associates with the EF-Tu.GDP complex and induces the exchange of GDP to GTP. It remains bound to the aminoacyl-tRNA.EF-Tu.GTP complex up to the GTP hydrolysis stage on the ribosome.</text>
</comment>
<comment type="subcellular location">
    <subcellularLocation>
        <location evidence="1">Cytoplasm</location>
    </subcellularLocation>
</comment>
<comment type="similarity">
    <text evidence="1">Belongs to the EF-Ts family.</text>
</comment>